<reference key="1">
    <citation type="submission" date="2006-12" db="EMBL/GenBank/DDBJ databases">
        <title>Complete sequence of Mycobacterium vanbaalenii PYR-1.</title>
        <authorList>
            <consortium name="US DOE Joint Genome Institute"/>
            <person name="Copeland A."/>
            <person name="Lucas S."/>
            <person name="Lapidus A."/>
            <person name="Barry K."/>
            <person name="Detter J.C."/>
            <person name="Glavina del Rio T."/>
            <person name="Hammon N."/>
            <person name="Israni S."/>
            <person name="Dalin E."/>
            <person name="Tice H."/>
            <person name="Pitluck S."/>
            <person name="Singan V."/>
            <person name="Schmutz J."/>
            <person name="Larimer F."/>
            <person name="Land M."/>
            <person name="Hauser L."/>
            <person name="Kyrpides N."/>
            <person name="Anderson I.J."/>
            <person name="Miller C."/>
            <person name="Richardson P."/>
        </authorList>
    </citation>
    <scope>NUCLEOTIDE SEQUENCE [LARGE SCALE GENOMIC DNA]</scope>
    <source>
        <strain>DSM 7251 / JCM 13017 / BCRC 16820 / KCTC 9966 / NRRL B-24157 / PYR-1</strain>
    </source>
</reference>
<proteinExistence type="inferred from homology"/>
<protein>
    <recommendedName>
        <fullName evidence="1">Regulatory protein RecX</fullName>
    </recommendedName>
</protein>
<keyword id="KW-0963">Cytoplasm</keyword>
<gene>
    <name evidence="1" type="primary">recX</name>
    <name type="ordered locus">Mvan_2421</name>
</gene>
<sequence length="184" mass="20440">MTLFPLPSTSDPAEADESTKRGEQARALCLRLLTARARTRAELEAALAKRGYPDDIAAAVLDRLTQVGLVDDEDFAEQWVRSRRLNAGKGKRALAAELRKKGVDNEVIDGALAGIDAGAERTRAEQLVRDKLRREKLGDPDDRDAENKVARRLVGMLARRGYNQTMAFDVVTAELANERERRKV</sequence>
<feature type="chain" id="PRO_1000084986" description="Regulatory protein RecX">
    <location>
        <begin position="1"/>
        <end position="184"/>
    </location>
</feature>
<feature type="region of interest" description="Disordered" evidence="2">
    <location>
        <begin position="1"/>
        <end position="21"/>
    </location>
</feature>
<name>RECX_MYCVP</name>
<accession>A1T7T4</accession>
<organism>
    <name type="scientific">Mycolicibacterium vanbaalenii (strain DSM 7251 / JCM 13017 / BCRC 16820 / KCTC 9966 / NRRL B-24157 / PYR-1)</name>
    <name type="common">Mycobacterium vanbaalenii</name>
    <dbReference type="NCBI Taxonomy" id="350058"/>
    <lineage>
        <taxon>Bacteria</taxon>
        <taxon>Bacillati</taxon>
        <taxon>Actinomycetota</taxon>
        <taxon>Actinomycetes</taxon>
        <taxon>Mycobacteriales</taxon>
        <taxon>Mycobacteriaceae</taxon>
        <taxon>Mycolicibacterium</taxon>
    </lineage>
</organism>
<evidence type="ECO:0000255" key="1">
    <source>
        <dbReference type="HAMAP-Rule" id="MF_01114"/>
    </source>
</evidence>
<evidence type="ECO:0000256" key="2">
    <source>
        <dbReference type="SAM" id="MobiDB-lite"/>
    </source>
</evidence>
<dbReference type="EMBL" id="CP000511">
    <property type="protein sequence ID" value="ABM13234.1"/>
    <property type="molecule type" value="Genomic_DNA"/>
</dbReference>
<dbReference type="RefSeq" id="WP_011779646.1">
    <property type="nucleotide sequence ID" value="NZ_JACKSD010000041.1"/>
</dbReference>
<dbReference type="SMR" id="A1T7T4"/>
<dbReference type="STRING" id="350058.Mvan_2421"/>
<dbReference type="KEGG" id="mva:Mvan_2421"/>
<dbReference type="eggNOG" id="COG2137">
    <property type="taxonomic scope" value="Bacteria"/>
</dbReference>
<dbReference type="HOGENOM" id="CLU_066607_0_2_11"/>
<dbReference type="Proteomes" id="UP000009159">
    <property type="component" value="Chromosome"/>
</dbReference>
<dbReference type="GO" id="GO:0005737">
    <property type="term" value="C:cytoplasm"/>
    <property type="evidence" value="ECO:0007669"/>
    <property type="project" value="UniProtKB-SubCell"/>
</dbReference>
<dbReference type="GO" id="GO:0006282">
    <property type="term" value="P:regulation of DNA repair"/>
    <property type="evidence" value="ECO:0007669"/>
    <property type="project" value="UniProtKB-UniRule"/>
</dbReference>
<dbReference type="Gene3D" id="1.10.10.10">
    <property type="entry name" value="Winged helix-like DNA-binding domain superfamily/Winged helix DNA-binding domain"/>
    <property type="match status" value="2"/>
</dbReference>
<dbReference type="HAMAP" id="MF_01114">
    <property type="entry name" value="RecX"/>
    <property type="match status" value="1"/>
</dbReference>
<dbReference type="InterPro" id="IPR053926">
    <property type="entry name" value="RecX_HTH_1st"/>
</dbReference>
<dbReference type="InterPro" id="IPR053924">
    <property type="entry name" value="RecX_HTH_2nd"/>
</dbReference>
<dbReference type="InterPro" id="IPR003783">
    <property type="entry name" value="Regulatory_RecX"/>
</dbReference>
<dbReference type="InterPro" id="IPR036388">
    <property type="entry name" value="WH-like_DNA-bd_sf"/>
</dbReference>
<dbReference type="NCBIfam" id="NF001056">
    <property type="entry name" value="PRK00117.3-1"/>
    <property type="match status" value="1"/>
</dbReference>
<dbReference type="PANTHER" id="PTHR33602">
    <property type="entry name" value="REGULATORY PROTEIN RECX FAMILY PROTEIN"/>
    <property type="match status" value="1"/>
</dbReference>
<dbReference type="PANTHER" id="PTHR33602:SF1">
    <property type="entry name" value="REGULATORY PROTEIN RECX FAMILY PROTEIN"/>
    <property type="match status" value="1"/>
</dbReference>
<dbReference type="Pfam" id="PF21982">
    <property type="entry name" value="RecX_HTH1"/>
    <property type="match status" value="1"/>
</dbReference>
<dbReference type="Pfam" id="PF02631">
    <property type="entry name" value="RecX_HTH2"/>
    <property type="match status" value="1"/>
</dbReference>
<comment type="function">
    <text evidence="1">Modulates RecA activity.</text>
</comment>
<comment type="subcellular location">
    <subcellularLocation>
        <location evidence="1">Cytoplasm</location>
    </subcellularLocation>
</comment>
<comment type="similarity">
    <text evidence="1">Belongs to the RecX family.</text>
</comment>